<proteinExistence type="inferred from homology"/>
<evidence type="ECO:0000255" key="1">
    <source>
        <dbReference type="HAMAP-Rule" id="MF_01155"/>
    </source>
</evidence>
<sequence>MSSTLIVQLDMRTLCQEADVTAECVIEIVEHGIVEPSGRTPEDWLFDDQAPLVTKRAVKLHQELELEWEGVALALELLQEVQQLRSENSMLKQRLGRFIQL</sequence>
<dbReference type="EMBL" id="AE015451">
    <property type="protein sequence ID" value="AAN70416.1"/>
    <property type="molecule type" value="Genomic_DNA"/>
</dbReference>
<dbReference type="RefSeq" id="NP_746952.1">
    <property type="nucleotide sequence ID" value="NC_002947.4"/>
</dbReference>
<dbReference type="RefSeq" id="WP_010955453.1">
    <property type="nucleotide sequence ID" value="NZ_CP169744.1"/>
</dbReference>
<dbReference type="SMR" id="Q88DH8"/>
<dbReference type="STRING" id="160488.PP_4847"/>
<dbReference type="PaxDb" id="160488-PP_4847"/>
<dbReference type="KEGG" id="ppu:PP_4847"/>
<dbReference type="PATRIC" id="fig|160488.4.peg.5178"/>
<dbReference type="eggNOG" id="COG0789">
    <property type="taxonomic scope" value="Bacteria"/>
</dbReference>
<dbReference type="HOGENOM" id="CLU_144710_3_1_6"/>
<dbReference type="OrthoDB" id="5567704at2"/>
<dbReference type="PhylomeDB" id="Q88DH8"/>
<dbReference type="BioCyc" id="PPUT160488:G1G01-5187-MONOMER"/>
<dbReference type="Proteomes" id="UP000000556">
    <property type="component" value="Chromosome"/>
</dbReference>
<dbReference type="Gene3D" id="1.10.1660.10">
    <property type="match status" value="1"/>
</dbReference>
<dbReference type="HAMAP" id="MF_01155">
    <property type="entry name" value="CbpM"/>
    <property type="match status" value="1"/>
</dbReference>
<dbReference type="InterPro" id="IPR022835">
    <property type="entry name" value="CbpM"/>
</dbReference>
<dbReference type="Pfam" id="PF13591">
    <property type="entry name" value="MerR_2"/>
    <property type="match status" value="1"/>
</dbReference>
<gene>
    <name evidence="1" type="primary">cbpM</name>
    <name type="ordered locus">PP_4847</name>
</gene>
<comment type="function">
    <text evidence="1">Interacts with CbpA and inhibits both the DnaJ-like co-chaperone activity and the DNA binding activity of CbpA. Together with CbpA, modulates the activity of the DnaK chaperone system. Does not inhibit the co-chaperone activity of DnaJ.</text>
</comment>
<comment type="similarity">
    <text evidence="1">Belongs to the CbpM family.</text>
</comment>
<keyword id="KW-1185">Reference proteome</keyword>
<name>CBPM_PSEPK</name>
<feature type="chain" id="PRO_0000211630" description="Chaperone modulatory protein CbpM">
    <location>
        <begin position="1"/>
        <end position="101"/>
    </location>
</feature>
<accession>Q88DH8</accession>
<organism>
    <name type="scientific">Pseudomonas putida (strain ATCC 47054 / DSM 6125 / CFBP 8728 / NCIMB 11950 / KT2440)</name>
    <dbReference type="NCBI Taxonomy" id="160488"/>
    <lineage>
        <taxon>Bacteria</taxon>
        <taxon>Pseudomonadati</taxon>
        <taxon>Pseudomonadota</taxon>
        <taxon>Gammaproteobacteria</taxon>
        <taxon>Pseudomonadales</taxon>
        <taxon>Pseudomonadaceae</taxon>
        <taxon>Pseudomonas</taxon>
    </lineage>
</organism>
<reference key="1">
    <citation type="journal article" date="2002" name="Environ. Microbiol.">
        <title>Complete genome sequence and comparative analysis of the metabolically versatile Pseudomonas putida KT2440.</title>
        <authorList>
            <person name="Nelson K.E."/>
            <person name="Weinel C."/>
            <person name="Paulsen I.T."/>
            <person name="Dodson R.J."/>
            <person name="Hilbert H."/>
            <person name="Martins dos Santos V.A.P."/>
            <person name="Fouts D.E."/>
            <person name="Gill S.R."/>
            <person name="Pop M."/>
            <person name="Holmes M."/>
            <person name="Brinkac L.M."/>
            <person name="Beanan M.J."/>
            <person name="DeBoy R.T."/>
            <person name="Daugherty S.C."/>
            <person name="Kolonay J.F."/>
            <person name="Madupu R."/>
            <person name="Nelson W.C."/>
            <person name="White O."/>
            <person name="Peterson J.D."/>
            <person name="Khouri H.M."/>
            <person name="Hance I."/>
            <person name="Chris Lee P."/>
            <person name="Holtzapple E.K."/>
            <person name="Scanlan D."/>
            <person name="Tran K."/>
            <person name="Moazzez A."/>
            <person name="Utterback T.R."/>
            <person name="Rizzo M."/>
            <person name="Lee K."/>
            <person name="Kosack D."/>
            <person name="Moestl D."/>
            <person name="Wedler H."/>
            <person name="Lauber J."/>
            <person name="Stjepandic D."/>
            <person name="Hoheisel J."/>
            <person name="Straetz M."/>
            <person name="Heim S."/>
            <person name="Kiewitz C."/>
            <person name="Eisen J.A."/>
            <person name="Timmis K.N."/>
            <person name="Duesterhoeft A."/>
            <person name="Tuemmler B."/>
            <person name="Fraser C.M."/>
        </authorList>
    </citation>
    <scope>NUCLEOTIDE SEQUENCE [LARGE SCALE GENOMIC DNA]</scope>
    <source>
        <strain>ATCC 47054 / DSM 6125 / CFBP 8728 / NCIMB 11950 / KT2440</strain>
    </source>
</reference>
<protein>
    <recommendedName>
        <fullName evidence="1">Chaperone modulatory protein CbpM</fullName>
    </recommendedName>
</protein>